<comment type="function">
    <text evidence="1">Catalyzes the transfer of the diacylglyceryl group from phosphatidylglycerol to the sulfhydryl group of the N-terminal cysteine of a prolipoprotein, the first step in the formation of mature lipoproteins.</text>
</comment>
<comment type="catalytic activity">
    <reaction evidence="1">
        <text>L-cysteinyl-[prolipoprotein] + a 1,2-diacyl-sn-glycero-3-phospho-(1'-sn-glycerol) = an S-1,2-diacyl-sn-glyceryl-L-cysteinyl-[prolipoprotein] + sn-glycerol 1-phosphate + H(+)</text>
        <dbReference type="Rhea" id="RHEA:56712"/>
        <dbReference type="Rhea" id="RHEA-COMP:14679"/>
        <dbReference type="Rhea" id="RHEA-COMP:14680"/>
        <dbReference type="ChEBI" id="CHEBI:15378"/>
        <dbReference type="ChEBI" id="CHEBI:29950"/>
        <dbReference type="ChEBI" id="CHEBI:57685"/>
        <dbReference type="ChEBI" id="CHEBI:64716"/>
        <dbReference type="ChEBI" id="CHEBI:140658"/>
        <dbReference type="EC" id="2.5.1.145"/>
    </reaction>
</comment>
<comment type="pathway">
    <text evidence="1">Protein modification; lipoprotein biosynthesis (diacylglyceryl transfer).</text>
</comment>
<comment type="subcellular location">
    <subcellularLocation>
        <location evidence="1">Cell inner membrane</location>
        <topology evidence="1">Multi-pass membrane protein</topology>
    </subcellularLocation>
</comment>
<comment type="similarity">
    <text evidence="1">Belongs to the Lgt family.</text>
</comment>
<feature type="chain" id="PRO_1000053531" description="Phosphatidylglycerol--prolipoprotein diacylglyceryl transferase">
    <location>
        <begin position="1"/>
        <end position="290"/>
    </location>
</feature>
<feature type="transmembrane region" description="Helical" evidence="1">
    <location>
        <begin position="21"/>
        <end position="41"/>
    </location>
</feature>
<feature type="transmembrane region" description="Helical" evidence="1">
    <location>
        <begin position="60"/>
        <end position="80"/>
    </location>
</feature>
<feature type="transmembrane region" description="Helical" evidence="1">
    <location>
        <begin position="96"/>
        <end position="116"/>
    </location>
</feature>
<feature type="transmembrane region" description="Helical" evidence="1">
    <location>
        <begin position="124"/>
        <end position="144"/>
    </location>
</feature>
<feature type="transmembrane region" description="Helical" evidence="1">
    <location>
        <begin position="199"/>
        <end position="219"/>
    </location>
</feature>
<feature type="transmembrane region" description="Helical" evidence="1">
    <location>
        <begin position="226"/>
        <end position="246"/>
    </location>
</feature>
<feature type="transmembrane region" description="Helical" evidence="1">
    <location>
        <begin position="260"/>
        <end position="280"/>
    </location>
</feature>
<feature type="binding site" evidence="1">
    <location>
        <position position="143"/>
    </location>
    <ligand>
        <name>a 1,2-diacyl-sn-glycero-3-phospho-(1'-sn-glycerol)</name>
        <dbReference type="ChEBI" id="CHEBI:64716"/>
    </ligand>
</feature>
<reference key="1">
    <citation type="journal article" date="2006" name="J. Bacteriol.">
        <title>Complete genome sequence of Yersinia pestis strains Antiqua and Nepal516: evidence of gene reduction in an emerging pathogen.</title>
        <authorList>
            <person name="Chain P.S.G."/>
            <person name="Hu P."/>
            <person name="Malfatti S.A."/>
            <person name="Radnedge L."/>
            <person name="Larimer F."/>
            <person name="Vergez L.M."/>
            <person name="Worsham P."/>
            <person name="Chu M.C."/>
            <person name="Andersen G.L."/>
        </authorList>
    </citation>
    <scope>NUCLEOTIDE SEQUENCE [LARGE SCALE GENOMIC DNA]</scope>
    <source>
        <strain>Nepal516</strain>
    </source>
</reference>
<reference key="2">
    <citation type="submission" date="2009-04" db="EMBL/GenBank/DDBJ databases">
        <title>Yersinia pestis Nepal516A whole genome shotgun sequencing project.</title>
        <authorList>
            <person name="Plunkett G. III"/>
            <person name="Anderson B.D."/>
            <person name="Baumler D.J."/>
            <person name="Burland V."/>
            <person name="Cabot E.L."/>
            <person name="Glasner J.D."/>
            <person name="Mau B."/>
            <person name="Neeno-Eckwall E."/>
            <person name="Perna N.T."/>
            <person name="Munk A.C."/>
            <person name="Tapia R."/>
            <person name="Green L.D."/>
            <person name="Rogers Y.C."/>
            <person name="Detter J.C."/>
            <person name="Bruce D.C."/>
            <person name="Brettin T.S."/>
        </authorList>
    </citation>
    <scope>NUCLEOTIDE SEQUENCE [LARGE SCALE GENOMIC DNA]</scope>
    <source>
        <strain>Nepal516</strain>
    </source>
</reference>
<keyword id="KW-0997">Cell inner membrane</keyword>
<keyword id="KW-1003">Cell membrane</keyword>
<keyword id="KW-0472">Membrane</keyword>
<keyword id="KW-0808">Transferase</keyword>
<keyword id="KW-0812">Transmembrane</keyword>
<keyword id="KW-1133">Transmembrane helix</keyword>
<accession>Q1CFB4</accession>
<accession>C4GX15</accession>
<evidence type="ECO:0000255" key="1">
    <source>
        <dbReference type="HAMAP-Rule" id="MF_01147"/>
    </source>
</evidence>
<organism>
    <name type="scientific">Yersinia pestis bv. Antiqua (strain Nepal516)</name>
    <dbReference type="NCBI Taxonomy" id="377628"/>
    <lineage>
        <taxon>Bacteria</taxon>
        <taxon>Pseudomonadati</taxon>
        <taxon>Pseudomonadota</taxon>
        <taxon>Gammaproteobacteria</taxon>
        <taxon>Enterobacterales</taxon>
        <taxon>Yersiniaceae</taxon>
        <taxon>Yersinia</taxon>
    </lineage>
</organism>
<sequence>MSNSYLAFPKFDPVIFSIGPVSLHWYGLMYLVGFVFAMWLAVRRANKPGSGWTKEEVENLLYAGFLGVFIGGRVGYVLFYNLPMFLDNPLYLFKVWDGGMSFHGGLIGVICVMLWFARRTKRNFFQVADFIAPLIPFGLGAGRLGNFINAELWGRVTTDTPWAMLFPTSRNTDIAIVAADPAKWQAIFNQYGVLPRHPSQLYEMILEGVVLFIILNVFIRKPRPMGSVSGLFLIGYGTFRIIVECFRQPDEQLGLFEGMISMGQILSVPMILAGIIMMIWAYRRPTQKLS</sequence>
<proteinExistence type="inferred from homology"/>
<gene>
    <name evidence="1" type="primary">lgt</name>
    <name type="ordered locus">YPN_2989</name>
    <name type="ORF">YP516_3385</name>
</gene>
<protein>
    <recommendedName>
        <fullName evidence="1">Phosphatidylglycerol--prolipoprotein diacylglyceryl transferase</fullName>
        <ecNumber evidence="1">2.5.1.145</ecNumber>
    </recommendedName>
</protein>
<name>LGT_YERPN</name>
<dbReference type="EC" id="2.5.1.145" evidence="1"/>
<dbReference type="EMBL" id="CP000305">
    <property type="protein sequence ID" value="ABG19316.1"/>
    <property type="molecule type" value="Genomic_DNA"/>
</dbReference>
<dbReference type="EMBL" id="ACNQ01000017">
    <property type="protein sequence ID" value="EEO75465.1"/>
    <property type="molecule type" value="Genomic_DNA"/>
</dbReference>
<dbReference type="RefSeq" id="WP_002211383.1">
    <property type="nucleotide sequence ID" value="NZ_ACNQ01000017.1"/>
</dbReference>
<dbReference type="SMR" id="Q1CFB4"/>
<dbReference type="GeneID" id="57973850"/>
<dbReference type="KEGG" id="ypn:YPN_2989"/>
<dbReference type="HOGENOM" id="CLU_013386_1_0_6"/>
<dbReference type="UniPathway" id="UPA00664"/>
<dbReference type="Proteomes" id="UP000008936">
    <property type="component" value="Chromosome"/>
</dbReference>
<dbReference type="GO" id="GO:0005886">
    <property type="term" value="C:plasma membrane"/>
    <property type="evidence" value="ECO:0007669"/>
    <property type="project" value="UniProtKB-SubCell"/>
</dbReference>
<dbReference type="GO" id="GO:0008961">
    <property type="term" value="F:phosphatidylglycerol-prolipoprotein diacylglyceryl transferase activity"/>
    <property type="evidence" value="ECO:0007669"/>
    <property type="project" value="UniProtKB-UniRule"/>
</dbReference>
<dbReference type="GO" id="GO:0042158">
    <property type="term" value="P:lipoprotein biosynthetic process"/>
    <property type="evidence" value="ECO:0007669"/>
    <property type="project" value="UniProtKB-UniRule"/>
</dbReference>
<dbReference type="HAMAP" id="MF_01147">
    <property type="entry name" value="Lgt"/>
    <property type="match status" value="1"/>
</dbReference>
<dbReference type="InterPro" id="IPR001640">
    <property type="entry name" value="Lgt"/>
</dbReference>
<dbReference type="NCBIfam" id="TIGR00544">
    <property type="entry name" value="lgt"/>
    <property type="match status" value="1"/>
</dbReference>
<dbReference type="PANTHER" id="PTHR30589:SF0">
    <property type="entry name" value="PHOSPHATIDYLGLYCEROL--PROLIPOPROTEIN DIACYLGLYCERYL TRANSFERASE"/>
    <property type="match status" value="1"/>
</dbReference>
<dbReference type="PANTHER" id="PTHR30589">
    <property type="entry name" value="PROLIPOPROTEIN DIACYLGLYCERYL TRANSFERASE"/>
    <property type="match status" value="1"/>
</dbReference>
<dbReference type="Pfam" id="PF01790">
    <property type="entry name" value="LGT"/>
    <property type="match status" value="1"/>
</dbReference>
<dbReference type="PROSITE" id="PS01311">
    <property type="entry name" value="LGT"/>
    <property type="match status" value="1"/>
</dbReference>